<feature type="chain" id="PRO_0000099422" description="Inactive chemokine-binding protein">
    <location>
        <begin position="1"/>
        <end position="244"/>
    </location>
</feature>
<feature type="region of interest" description="Disordered" evidence="3">
    <location>
        <begin position="1"/>
        <end position="79"/>
    </location>
</feature>
<feature type="compositionally biased region" description="Polar residues" evidence="3">
    <location>
        <begin position="37"/>
        <end position="53"/>
    </location>
</feature>
<feature type="compositionally biased region" description="Acidic residues" evidence="3">
    <location>
        <begin position="54"/>
        <end position="77"/>
    </location>
</feature>
<keyword id="KW-0244">Early protein</keyword>
<keyword id="KW-1035">Host cytoplasm</keyword>
<keyword id="KW-1185">Reference proteome</keyword>
<organism>
    <name type="scientific">Vaccinia virus (strain Copenhagen)</name>
    <name type="common">VACV</name>
    <dbReference type="NCBI Taxonomy" id="10249"/>
    <lineage>
        <taxon>Viruses</taxon>
        <taxon>Varidnaviria</taxon>
        <taxon>Bamfordvirae</taxon>
        <taxon>Nucleocytoviricota</taxon>
        <taxon>Pokkesviricetes</taxon>
        <taxon>Chitovirales</taxon>
        <taxon>Poxviridae</taxon>
        <taxon>Chordopoxvirinae</taxon>
        <taxon>Orthopoxvirus</taxon>
        <taxon>Vaccinia virus</taxon>
    </lineage>
</organism>
<protein>
    <recommendedName>
        <fullName>Inactive chemokine-binding protein</fullName>
        <shortName>vCKBP</shortName>
    </recommendedName>
</protein>
<organismHost>
    <name type="scientific">Homo sapiens</name>
    <name type="common">Human</name>
    <dbReference type="NCBI Taxonomy" id="9606"/>
</organismHost>
<name>PG001_VACCC</name>
<accession>P21090</accession>
<dbReference type="EMBL" id="M35027">
    <property type="protein sequence ID" value="AAA48229.1"/>
    <property type="molecule type" value="Genomic_DNA"/>
</dbReference>
<dbReference type="EMBL" id="M35027">
    <property type="protein sequence ID" value="AAA47970.1"/>
    <property type="molecule type" value="Genomic_DNA"/>
</dbReference>
<dbReference type="PIR" id="I33172">
    <property type="entry name" value="A42529"/>
</dbReference>
<dbReference type="BMRB" id="P21090"/>
<dbReference type="SMR" id="P21090"/>
<dbReference type="Proteomes" id="UP000008269">
    <property type="component" value="Segment"/>
</dbReference>
<dbReference type="GO" id="GO:0030430">
    <property type="term" value="C:host cell cytoplasm"/>
    <property type="evidence" value="ECO:0007669"/>
    <property type="project" value="UniProtKB-SubCell"/>
</dbReference>
<dbReference type="Gene3D" id="2.60.240.10">
    <property type="entry name" value="Major secreted virus protein"/>
    <property type="match status" value="1"/>
</dbReference>
<dbReference type="InterPro" id="IPR009173">
    <property type="entry name" value="Chemkine-bd_vir"/>
</dbReference>
<dbReference type="InterPro" id="IPR003184">
    <property type="entry name" value="Orthopox_35kDa"/>
</dbReference>
<dbReference type="InterPro" id="IPR036540">
    <property type="entry name" value="Pox_vCCI-like_sf"/>
</dbReference>
<dbReference type="Pfam" id="PF02250">
    <property type="entry name" value="Orthopox_35kD"/>
    <property type="match status" value="1"/>
</dbReference>
<dbReference type="PIRSF" id="PIRSF003696">
    <property type="entry name" value="VAC_C23L"/>
    <property type="match status" value="1"/>
</dbReference>
<dbReference type="SUPFAM" id="SSF49889">
    <property type="entry name" value="Soluble secreted chemokine inhibitor, VCCI"/>
    <property type="match status" value="1"/>
</dbReference>
<reference key="1">
    <citation type="journal article" date="1990" name="Virology">
        <title>The complete DNA sequence of vaccinia virus.</title>
        <authorList>
            <person name="Goebel S.J."/>
            <person name="Johnson G.P."/>
            <person name="Perkus M.E."/>
            <person name="Davis S.W."/>
            <person name="Winslow J.P."/>
            <person name="Paoletti E."/>
        </authorList>
    </citation>
    <scope>NUCLEOTIDE SEQUENCE [LARGE SCALE GENOMIC DNA]</scope>
</reference>
<proteinExistence type="inferred from homology"/>
<gene>
    <name type="primary">OPG001</name>
    <name type="synonym">B29R</name>
    <name type="synonym">C23L</name>
</gene>
<comment type="function">
    <text evidence="1">The protein is truncated in this vaccinal strain and presumably inactive, because the lack of signal peptide prevents the protein of being secreted. In the other strains inhibits host immune defense by binding to host chemokines. Binds host CC chemokines (beta chemokines) such as RANTES with high affinity, but not CXC or C chemokines (alpha and gamma chemokines) (By similarity).</text>
</comment>
<comment type="subcellular location">
    <subcellularLocation>
        <location evidence="4">Host cytoplasm</location>
    </subcellularLocation>
    <text evidence="1">the wild-type protein is secreted, but this strain encodes a truncated form which lacks the signal peptide.</text>
</comment>
<comment type="induction">
    <text evidence="2">Expressed in the early phase of the viral replicative cycle.</text>
</comment>
<comment type="similarity">
    <text evidence="4">Belongs to the orthopoxvirus OPG001 family.</text>
</comment>
<evidence type="ECO:0000250" key="1"/>
<evidence type="ECO:0000250" key="2">
    <source>
        <dbReference type="UniProtKB" id="Q805H7"/>
    </source>
</evidence>
<evidence type="ECO:0000256" key="3">
    <source>
        <dbReference type="SAM" id="MobiDB-lite"/>
    </source>
</evidence>
<evidence type="ECO:0000305" key="4"/>
<sequence>MHVPASLQQSSSSSSSCTEEENKHHMGIDVIIKVTKQDQTPTNDKICQSVTEITESESDPDPEVESEDDSTSVEDVDPPTTYYSIIGGGLRMNFGFTKCPQIKSISESADGNTVNARLSSVSPGQGKDSPAITREEALAMIKDCEVSIDIRCSEEEKDSDIKTHPVLGSNISHKKVSYEDIIGSTIVDTKCVKNLEFSVRIGDMCKESSELEVKDGFKYVDGSASEGATDDTSLIDSTKLKACV</sequence>